<organism>
    <name type="scientific">Cottoperca gobio</name>
    <name type="common">Frogmouth</name>
    <name type="synonym">Aphritis gobio</name>
    <dbReference type="NCBI Taxonomy" id="56716"/>
    <lineage>
        <taxon>Eukaryota</taxon>
        <taxon>Metazoa</taxon>
        <taxon>Chordata</taxon>
        <taxon>Craniata</taxon>
        <taxon>Vertebrata</taxon>
        <taxon>Euteleostomi</taxon>
        <taxon>Actinopterygii</taxon>
        <taxon>Neopterygii</taxon>
        <taxon>Teleostei</taxon>
        <taxon>Neoteleostei</taxon>
        <taxon>Acanthomorphata</taxon>
        <taxon>Eupercaria</taxon>
        <taxon>Perciformes</taxon>
        <taxon>Notothenioidei</taxon>
        <taxon>Bovichtidae</taxon>
        <taxon>Cottoperca</taxon>
    </lineage>
</organism>
<reference evidence="6" key="1">
    <citation type="journal article" date="2006" name="Polar Biol.">
        <title>Embryonic beta-globin in the non-Antartic notothenioid fish Cottoperca gobio (Bovichtidae).</title>
        <authorList>
            <person name="Giordano D."/>
            <person name="Grassi L."/>
            <person name="Parisi E."/>
            <person name="Bargelloni L."/>
            <person name="di Prisco G."/>
            <person name="Verde C."/>
        </authorList>
    </citation>
    <scope>PROTEIN SEQUENCE OF 2-147</scope>
    <scope>SUBUNIT</scope>
    <source>
        <tissue evidence="5">Blood</tissue>
    </source>
</reference>
<reference evidence="6" key="2">
    <citation type="journal article" date="2009" name="FEBS J.">
        <title>The hemoglobins of the sub-Antarctic fish Cottoperca gobio, a phyletically basal species--oxygen-binding equilibria, kinetics and molecular dynamics.</title>
        <authorList>
            <person name="Giordano D."/>
            <person name="Boechi L."/>
            <person name="Vergara A."/>
            <person name="Marti M.A."/>
            <person name="Samuni U."/>
            <person name="Dantsker D."/>
            <person name="Grassi L."/>
            <person name="Estrin D.A."/>
            <person name="Friedman J.M."/>
            <person name="Mazzarella L."/>
            <person name="di Prisco G."/>
            <person name="Verde C."/>
        </authorList>
    </citation>
    <scope>PROTEIN SEQUENCE OF 2-147</scope>
    <scope>SUBUNIT</scope>
    <source>
        <tissue evidence="4">Blood</tissue>
    </source>
</reference>
<sequence>MVEWTDFERATIKDVFSKIEYEVVGPAALARCLVVYPWTQRYFGNFGNLYNAAAITGNPKVAKHGITILHGLDKAVKNMDDIRNTYAELSVLHSEKLHVDPDNFKLLADCLTIVVAAQMGKAFTGEIQAAFQKFLAVVVSSLGRQYH</sequence>
<gene>
    <name type="primary">hbb</name>
</gene>
<accession>P84652</accession>
<evidence type="ECO:0000250" key="1"/>
<evidence type="ECO:0000250" key="2">
    <source>
        <dbReference type="UniProtKB" id="P80044"/>
    </source>
</evidence>
<evidence type="ECO:0000255" key="3">
    <source>
        <dbReference type="PROSITE-ProRule" id="PRU00238"/>
    </source>
</evidence>
<evidence type="ECO:0000269" key="4">
    <source>
    </source>
</evidence>
<evidence type="ECO:0000269" key="5">
    <source ref="1"/>
</evidence>
<evidence type="ECO:0000305" key="6"/>
<name>HBB_COTGO</name>
<dbReference type="SMR" id="P84652"/>
<dbReference type="FunCoup" id="P84652">
    <property type="interactions" value="140"/>
</dbReference>
<dbReference type="InParanoid" id="P84652"/>
<dbReference type="Proteomes" id="UP000504630">
    <property type="component" value="Unplaced"/>
</dbReference>
<dbReference type="GO" id="GO:0072562">
    <property type="term" value="C:blood microparticle"/>
    <property type="evidence" value="ECO:0007669"/>
    <property type="project" value="TreeGrafter"/>
</dbReference>
<dbReference type="GO" id="GO:0031838">
    <property type="term" value="C:haptoglobin-hemoglobin complex"/>
    <property type="evidence" value="ECO:0007669"/>
    <property type="project" value="TreeGrafter"/>
</dbReference>
<dbReference type="GO" id="GO:0005833">
    <property type="term" value="C:hemoglobin complex"/>
    <property type="evidence" value="ECO:0007669"/>
    <property type="project" value="InterPro"/>
</dbReference>
<dbReference type="GO" id="GO:0031720">
    <property type="term" value="F:haptoglobin binding"/>
    <property type="evidence" value="ECO:0007669"/>
    <property type="project" value="TreeGrafter"/>
</dbReference>
<dbReference type="GO" id="GO:0020037">
    <property type="term" value="F:heme binding"/>
    <property type="evidence" value="ECO:0007669"/>
    <property type="project" value="InterPro"/>
</dbReference>
<dbReference type="GO" id="GO:0046872">
    <property type="term" value="F:metal ion binding"/>
    <property type="evidence" value="ECO:0007669"/>
    <property type="project" value="UniProtKB-KW"/>
</dbReference>
<dbReference type="GO" id="GO:0043177">
    <property type="term" value="F:organic acid binding"/>
    <property type="evidence" value="ECO:0007669"/>
    <property type="project" value="TreeGrafter"/>
</dbReference>
<dbReference type="GO" id="GO:0019825">
    <property type="term" value="F:oxygen binding"/>
    <property type="evidence" value="ECO:0007669"/>
    <property type="project" value="InterPro"/>
</dbReference>
<dbReference type="GO" id="GO:0005344">
    <property type="term" value="F:oxygen carrier activity"/>
    <property type="evidence" value="ECO:0007669"/>
    <property type="project" value="UniProtKB-KW"/>
</dbReference>
<dbReference type="GO" id="GO:0004601">
    <property type="term" value="F:peroxidase activity"/>
    <property type="evidence" value="ECO:0007669"/>
    <property type="project" value="TreeGrafter"/>
</dbReference>
<dbReference type="GO" id="GO:0042744">
    <property type="term" value="P:hydrogen peroxide catabolic process"/>
    <property type="evidence" value="ECO:0007669"/>
    <property type="project" value="TreeGrafter"/>
</dbReference>
<dbReference type="CDD" id="cd08925">
    <property type="entry name" value="Hb-beta-like"/>
    <property type="match status" value="1"/>
</dbReference>
<dbReference type="FunFam" id="1.10.490.10:FF:000001">
    <property type="entry name" value="Hemoglobin subunit beta"/>
    <property type="match status" value="1"/>
</dbReference>
<dbReference type="Gene3D" id="1.10.490.10">
    <property type="entry name" value="Globins"/>
    <property type="match status" value="1"/>
</dbReference>
<dbReference type="InterPro" id="IPR000971">
    <property type="entry name" value="Globin"/>
</dbReference>
<dbReference type="InterPro" id="IPR009050">
    <property type="entry name" value="Globin-like_sf"/>
</dbReference>
<dbReference type="InterPro" id="IPR012292">
    <property type="entry name" value="Globin/Proto"/>
</dbReference>
<dbReference type="InterPro" id="IPR002337">
    <property type="entry name" value="Hemoglobin_b"/>
</dbReference>
<dbReference type="InterPro" id="IPR050056">
    <property type="entry name" value="Hemoglobin_oxygen_transport"/>
</dbReference>
<dbReference type="PANTHER" id="PTHR11442">
    <property type="entry name" value="HEMOGLOBIN FAMILY MEMBER"/>
    <property type="match status" value="1"/>
</dbReference>
<dbReference type="PANTHER" id="PTHR11442:SF7">
    <property type="entry name" value="HEMOGLOBIN SUBUNIT EPSILON"/>
    <property type="match status" value="1"/>
</dbReference>
<dbReference type="Pfam" id="PF00042">
    <property type="entry name" value="Globin"/>
    <property type="match status" value="1"/>
</dbReference>
<dbReference type="PRINTS" id="PR00814">
    <property type="entry name" value="BETAHAEM"/>
</dbReference>
<dbReference type="SUPFAM" id="SSF46458">
    <property type="entry name" value="Globin-like"/>
    <property type="match status" value="1"/>
</dbReference>
<dbReference type="PROSITE" id="PS01033">
    <property type="entry name" value="GLOBIN"/>
    <property type="match status" value="1"/>
</dbReference>
<protein>
    <recommendedName>
        <fullName>Hemoglobin subunit beta</fullName>
    </recommendedName>
    <alternativeName>
        <fullName>Beta-globin</fullName>
    </alternativeName>
    <alternativeName>
        <fullName>Hemoglobin beta chain</fullName>
    </alternativeName>
</protein>
<proteinExistence type="evidence at protein level"/>
<feature type="initiator methionine" description="Removed" evidence="1">
    <location>
        <position position="1"/>
    </location>
</feature>
<feature type="chain" id="PRO_0000250612" description="Hemoglobin subunit beta" evidence="4">
    <location>
        <begin position="2"/>
        <end position="147"/>
    </location>
</feature>
<feature type="domain" description="Globin" evidence="3">
    <location>
        <begin position="3"/>
        <end position="147"/>
    </location>
</feature>
<feature type="binding site" description="distal binding residue" evidence="2 3">
    <location>
        <position position="64"/>
    </location>
    <ligand>
        <name>heme b</name>
        <dbReference type="ChEBI" id="CHEBI:60344"/>
    </ligand>
    <ligandPart>
        <name>Fe</name>
        <dbReference type="ChEBI" id="CHEBI:18248"/>
    </ligandPart>
</feature>
<feature type="binding site" description="proximal binding residue" evidence="2 3">
    <location>
        <position position="93"/>
    </location>
    <ligand>
        <name>heme b</name>
        <dbReference type="ChEBI" id="CHEBI:60344"/>
    </ligand>
    <ligandPart>
        <name>Fe</name>
        <dbReference type="ChEBI" id="CHEBI:18248"/>
    </ligandPart>
</feature>
<keyword id="KW-0903">Direct protein sequencing</keyword>
<keyword id="KW-0349">Heme</keyword>
<keyword id="KW-0408">Iron</keyword>
<keyword id="KW-0479">Metal-binding</keyword>
<keyword id="KW-0561">Oxygen transport</keyword>
<keyword id="KW-1185">Reference proteome</keyword>
<keyword id="KW-0813">Transport</keyword>
<comment type="function">
    <text evidence="6">Involved in oxygen transport from gills to the various peripheral tissues.</text>
</comment>
<comment type="subunit">
    <text evidence="4 5">Hb 1 is a heterotetramer of two alpha-1 and two beta chains. Hb 2 is a heterotetramer of two alpha-2 and two beta chains.</text>
</comment>
<comment type="tissue specificity">
    <text evidence="6">Red blood cells.</text>
</comment>
<comment type="miscellaneous">
    <text evidence="4">This fish has two hemoglobins: Hb1 and Hb2. They display the Bohr and root effects.</text>
</comment>
<comment type="similarity">
    <text evidence="3">Belongs to the globin family.</text>
</comment>